<evidence type="ECO:0000255" key="1"/>
<evidence type="ECO:0000269" key="2">
    <source>
    </source>
</evidence>
<evidence type="ECO:0000269" key="3">
    <source>
    </source>
</evidence>
<evidence type="ECO:0000303" key="4">
    <source>
    </source>
</evidence>
<evidence type="ECO:0000305" key="5"/>
<evidence type="ECO:0000305" key="6">
    <source>
    </source>
</evidence>
<evidence type="ECO:0000312" key="7">
    <source>
        <dbReference type="EMBL" id="PNW81805.1"/>
    </source>
</evidence>
<keyword id="KW-0150">Chloroplast</keyword>
<keyword id="KW-0472">Membrane</keyword>
<keyword id="KW-0597">Phosphoprotein</keyword>
<keyword id="KW-0602">Photosynthesis</keyword>
<keyword id="KW-0604">Photosystem II</keyword>
<keyword id="KW-0934">Plastid</keyword>
<keyword id="KW-1185">Reference proteome</keyword>
<keyword id="KW-0793">Thylakoid</keyword>
<keyword id="KW-0809">Transit peptide</keyword>
<keyword id="KW-0812">Transmembrane</keyword>
<keyword id="KW-1133">Transmembrane helix</keyword>
<accession>A0A2K3DMP5</accession>
<organism>
    <name type="scientific">Chlamydomonas reinhardtii</name>
    <name type="common">Chlamydomonas smithii</name>
    <dbReference type="NCBI Taxonomy" id="3055"/>
    <lineage>
        <taxon>Eukaryota</taxon>
        <taxon>Viridiplantae</taxon>
        <taxon>Chlorophyta</taxon>
        <taxon>core chlorophytes</taxon>
        <taxon>Chlorophyceae</taxon>
        <taxon>CS clade</taxon>
        <taxon>Chlamydomonadales</taxon>
        <taxon>Chlamydomonadaceae</taxon>
        <taxon>Chlamydomonas</taxon>
    </lineage>
</organism>
<gene>
    <name evidence="4" type="primary">PSBR</name>
    <name evidence="7" type="ORF">CHLRE_06g261000v5</name>
</gene>
<dbReference type="EMBL" id="CM008967">
    <property type="protein sequence ID" value="PNW81805.1"/>
    <property type="molecule type" value="Genomic_DNA"/>
</dbReference>
<dbReference type="SMR" id="A0A2K3DMP5"/>
<dbReference type="FunCoup" id="A0A2K3DMP5">
    <property type="interactions" value="543"/>
</dbReference>
<dbReference type="STRING" id="3055.A0A2K3DMP5"/>
<dbReference type="iPTMnet" id="A0A2K3DMP5"/>
<dbReference type="PaxDb" id="3055-EDP08565"/>
<dbReference type="EnsemblPlants" id="PNW81805">
    <property type="protein sequence ID" value="PNW81805"/>
    <property type="gene ID" value="CHLRE_06g261000v5"/>
</dbReference>
<dbReference type="Gramene" id="PNW81805">
    <property type="protein sequence ID" value="PNW81805"/>
    <property type="gene ID" value="CHLRE_06g261000v5"/>
</dbReference>
<dbReference type="InParanoid" id="A0A2K3DMP5"/>
<dbReference type="OrthoDB" id="496093at2759"/>
<dbReference type="Proteomes" id="UP000006906">
    <property type="component" value="Chromosome 6"/>
</dbReference>
<dbReference type="ExpressionAtlas" id="A0A2K3DMP5">
    <property type="expression patterns" value="baseline and differential"/>
</dbReference>
<dbReference type="GO" id="GO:0009535">
    <property type="term" value="C:chloroplast thylakoid membrane"/>
    <property type="evidence" value="ECO:0007669"/>
    <property type="project" value="UniProtKB-SubCell"/>
</dbReference>
<dbReference type="GO" id="GO:0009654">
    <property type="term" value="C:photosystem II oxygen evolving complex"/>
    <property type="evidence" value="ECO:0007669"/>
    <property type="project" value="InterPro"/>
</dbReference>
<dbReference type="GO" id="GO:0015979">
    <property type="term" value="P:photosynthesis"/>
    <property type="evidence" value="ECO:0007669"/>
    <property type="project" value="UniProtKB-KW"/>
</dbReference>
<dbReference type="InterPro" id="IPR006814">
    <property type="entry name" value="PSII_PsbR"/>
</dbReference>
<dbReference type="PANTHER" id="PTHR34369">
    <property type="entry name" value="PHOTOSYSTEM II 10 KDA POLYPEPTIDE, CHLOROPLASTIC"/>
    <property type="match status" value="1"/>
</dbReference>
<dbReference type="PANTHER" id="PTHR34369:SF7">
    <property type="entry name" value="PHOTOSYSTEM II 10 KDA POLYPEPTIDE, CHLOROPLASTIC"/>
    <property type="match status" value="1"/>
</dbReference>
<dbReference type="Pfam" id="PF04725">
    <property type="entry name" value="PsbR"/>
    <property type="match status" value="1"/>
</dbReference>
<feature type="transit peptide" description="Chloroplast" evidence="1">
    <location>
        <begin position="1"/>
        <end position="27"/>
    </location>
</feature>
<feature type="chain" id="PRO_0000447657" description="Photosystem II protein PSBR, chloroplastic">
    <location>
        <begin position="28"/>
        <end position="141"/>
    </location>
</feature>
<feature type="transmembrane region" description="Helical" evidence="1">
    <location>
        <begin position="114"/>
        <end position="134"/>
    </location>
</feature>
<feature type="modified residue" description="Phosphothreonine" evidence="3">
    <location>
        <position position="34"/>
    </location>
</feature>
<feature type="modified residue" description="Phosphothreonine" evidence="3">
    <location>
        <position position="37"/>
    </location>
</feature>
<feature type="modified residue" description="Phosphoserine" evidence="2 3">
    <location>
        <position position="43"/>
    </location>
</feature>
<proteinExistence type="evidence at protein level"/>
<comment type="function">
    <text evidence="3 6">Associated with the oxygen-evolving complex of photosystem II (PSII) (Probable). Is required for the stable binding of LHCSR3 to PSII-LHCII supercomplexes and is essential for efficient energy-dependent quenching and the integrity of the PSII-LHCII-LHCSR3 supercomplex under continuous high light (PubMed:25699588).</text>
</comment>
<comment type="subcellular location">
    <subcellularLocation>
        <location evidence="6">Plastid</location>
        <location evidence="6">Chloroplast thylakoid membrane</location>
        <topology evidence="1">Single-pass membrane protein</topology>
    </subcellularLocation>
    <text>Associated with the photosystem II complex.</text>
</comment>
<comment type="similarity">
    <text evidence="5">Belongs to the psbR family.</text>
</comment>
<name>PSBR_CHLRE</name>
<reference key="1">
    <citation type="journal article" date="2007" name="Science">
        <title>The Chlamydomonas genome reveals the evolution of key animal and plant functions.</title>
        <authorList>
            <person name="Merchant S.S."/>
            <person name="Prochnik S.E."/>
            <person name="Vallon O."/>
            <person name="Harris E.H."/>
            <person name="Karpowicz S.J."/>
            <person name="Witman G.B."/>
            <person name="Terry A."/>
            <person name="Salamov A."/>
            <person name="Fritz-Laylin L.K."/>
            <person name="Marechal-Drouard L."/>
            <person name="Marshall W.F."/>
            <person name="Qu L.H."/>
            <person name="Nelson D.R."/>
            <person name="Sanderfoot A.A."/>
            <person name="Spalding M.H."/>
            <person name="Kapitonov V.V."/>
            <person name="Ren Q."/>
            <person name="Ferris P."/>
            <person name="Lindquist E."/>
            <person name="Shapiro H."/>
            <person name="Lucas S.M."/>
            <person name="Grimwood J."/>
            <person name="Schmutz J."/>
            <person name="Cardol P."/>
            <person name="Cerutti H."/>
            <person name="Chanfreau G."/>
            <person name="Chen C.L."/>
            <person name="Cognat V."/>
            <person name="Croft M.T."/>
            <person name="Dent R."/>
            <person name="Dutcher S."/>
            <person name="Fernandez E."/>
            <person name="Fukuzawa H."/>
            <person name="Gonzalez-Ballester D."/>
            <person name="Gonzalez-Halphen D."/>
            <person name="Hallmann A."/>
            <person name="Hanikenne M."/>
            <person name="Hippler M."/>
            <person name="Inwood W."/>
            <person name="Jabbari K."/>
            <person name="Kalanon M."/>
            <person name="Kuras R."/>
            <person name="Lefebvre P.A."/>
            <person name="Lemaire S.D."/>
            <person name="Lobanov A.V."/>
            <person name="Lohr M."/>
            <person name="Manuell A."/>
            <person name="Meier I."/>
            <person name="Mets L."/>
            <person name="Mittag M."/>
            <person name="Mittelmeier T."/>
            <person name="Moroney J.V."/>
            <person name="Moseley J."/>
            <person name="Napoli C."/>
            <person name="Nedelcu A.M."/>
            <person name="Niyogi K."/>
            <person name="Novoselov S.V."/>
            <person name="Paulsen I.T."/>
            <person name="Pazour G.J."/>
            <person name="Purton S."/>
            <person name="Ral J.P."/>
            <person name="Riano-Pachon D.M."/>
            <person name="Riekhof W."/>
            <person name="Rymarquis L."/>
            <person name="Schroda M."/>
            <person name="Stern D."/>
            <person name="Umen J."/>
            <person name="Willows R."/>
            <person name="Wilson N."/>
            <person name="Zimmer S.L."/>
            <person name="Allmer J."/>
            <person name="Balk J."/>
            <person name="Bisova K."/>
            <person name="Chen C.J."/>
            <person name="Elias M."/>
            <person name="Gendler K."/>
            <person name="Hauser C."/>
            <person name="Lamb M.R."/>
            <person name="Ledford H."/>
            <person name="Long J.C."/>
            <person name="Minagawa J."/>
            <person name="Page M.D."/>
            <person name="Pan J."/>
            <person name="Pootakham W."/>
            <person name="Roje S."/>
            <person name="Rose A."/>
            <person name="Stahlberg E."/>
            <person name="Terauchi A.M."/>
            <person name="Yang P."/>
            <person name="Ball S."/>
            <person name="Bowler C."/>
            <person name="Dieckmann C.L."/>
            <person name="Gladyshev V.N."/>
            <person name="Green P."/>
            <person name="Jorgensen R."/>
            <person name="Mayfield S."/>
            <person name="Mueller-Roeber B."/>
            <person name="Rajamani S."/>
            <person name="Sayre R.T."/>
            <person name="Brokstein P."/>
            <person name="Dubchak I."/>
            <person name="Goodstein D."/>
            <person name="Hornick L."/>
            <person name="Huang Y.W."/>
            <person name="Jhaveri J."/>
            <person name="Luo Y."/>
            <person name="Martinez D."/>
            <person name="Ngau W.C."/>
            <person name="Otillar B."/>
            <person name="Poliakov A."/>
            <person name="Porter A."/>
            <person name="Szajkowski L."/>
            <person name="Werner G."/>
            <person name="Zhou K."/>
            <person name="Grigoriev I.V."/>
            <person name="Rokhsar D.S."/>
            <person name="Grossman A.R."/>
        </authorList>
    </citation>
    <scope>NUCLEOTIDE SEQUENCE [LARGE SCALE GENOMIC DNA]</scope>
    <source>
        <strain>CC-503</strain>
    </source>
</reference>
<reference key="2">
    <citation type="submission" date="2017-07" db="EMBL/GenBank/DDBJ databases">
        <title>WGS assembly of Chlamydomonas reinhardtii.</title>
        <authorList>
            <consortium name="Chlamydomonas Annotation Team"/>
            <consortium name="JGI Annotation Team"/>
            <person name="Merchant S.S."/>
            <person name="Prochnik S.E."/>
            <person name="Vallon O."/>
            <person name="Harris E.H."/>
            <person name="Karpowicz S.J."/>
            <person name="Witman G.B."/>
            <person name="Terry A."/>
            <person name="Salamov A."/>
            <person name="Fritz-Laylin L.K."/>
            <person name="Marechal-Drouard L."/>
            <person name="Marshall W.F."/>
            <person name="Qu L.H."/>
            <person name="Nelson D.R."/>
            <person name="Sanderfoot A.A."/>
            <person name="Spalding M.H."/>
            <person name="Kapitonov V.V."/>
            <person name="Ren Q."/>
            <person name="Ferris P."/>
            <person name="Lindquist E."/>
            <person name="Shapiro H."/>
            <person name="Lucas S.M."/>
            <person name="Grimwood J."/>
            <person name="Schmutz J."/>
            <person name="Grigoriev I.V."/>
            <person name="Rokhsar D.S."/>
        </authorList>
    </citation>
    <scope>GENOME REANNOTATION</scope>
    <source>
        <strain>CC-503</strain>
    </source>
</reference>
<reference key="3">
    <citation type="journal article" date="2006" name="Mol. Cell. Proteomics">
        <title>Environmentally modulated phosphoproteome of photosynthetic membranes in the green alga Chlamydomonas reinhardtii.</title>
        <authorList>
            <person name="Turkina M.V."/>
            <person name="Kargul J."/>
            <person name="Blanco-Rivero A."/>
            <person name="Villarejo A."/>
            <person name="Barber J."/>
            <person name="Vener A.V."/>
        </authorList>
    </citation>
    <scope>IDENTIFICATION BY MASS SPECTROMETRY</scope>
    <scope>PHOSPHORYLATION AT SER-43</scope>
</reference>
<reference key="4">
    <citation type="journal article" date="2015" name="Plant Physiol.">
        <title>PHOTOSYSTEM II SUBUNIT R is required for efficient binding of LIGHT-HARVESTING COMPLEX STRESS-RELATED PROTEIN3 to photosystem II-light-harvesting supercomplexes in Chlamydomonas reinhardtii.</title>
        <authorList>
            <person name="Xue H."/>
            <person name="Tokutsu R."/>
            <person name="Bergner S.V."/>
            <person name="Scholz M."/>
            <person name="Minagawa J."/>
            <person name="Hippler M."/>
        </authorList>
    </citation>
    <scope>FUNCTION</scope>
    <scope>IDENTIFICATION BY MASS SPECTROMETRY</scope>
    <scope>PHOSPHORYLATION AT THR-34; THR-37 AND SER-43</scope>
</reference>
<sequence length="141" mass="15139">MATMQISAKGLAPLRPRVSSRRVVKPVASGGGKTDITKVGLNSIEDPVVKQNLMGKSRFMNKKDWKDASGRKGKGYGVYRYEDKYGANVDGYSPIYTPDLWTESGDSYTLGTKGLIAWAGLVLVLLAVGVNLIISTSQLGA</sequence>
<protein>
    <recommendedName>
        <fullName evidence="5">Photosystem II protein PSBR, chloroplastic</fullName>
    </recommendedName>
    <alternativeName>
        <fullName evidence="4">Protein PHOTOSYSTEM II SUBUNIT R</fullName>
    </alternativeName>
</protein>